<accession>P35351</accession>
<sequence>MKDNFSFAATSRNITSSLPFDNLNATGTNESAFNCSHKPADKHLEAIPVLYYMIFVIGFAVNIVVVSLFCCQKGPKKVSSIYIFNLAVADLLLLATLPLWATYYSYRYDWLFGPVMCKVFGSFLTLNMFASIFFITCMSVDRYQSVIYPFLSQRRNPWQASYVVPLVWCMACLSSLPTFYFRDVRTIEYLGVNACIMAFPPEKYAQWSAGIALMKNILGFIIPLIFIATCYFGIRKHLLKTNSYGKNRITRDQVLKMAAAVVLAFIICWLPFHVLTFLDALTWMGIINSCEVIAVIDLALPFAILLGFTNSCVNPFLYCFVGNRFQQKLRSVFRVPITWLQGKRETMSCRKSSSLREMDTFVS</sequence>
<gene>
    <name evidence="11" type="primary">Agtr2</name>
</gene>
<proteinExistence type="evidence at protein level"/>
<evidence type="ECO:0000250" key="1">
    <source>
        <dbReference type="UniProtKB" id="P35374"/>
    </source>
</evidence>
<evidence type="ECO:0000250" key="2">
    <source>
        <dbReference type="UniProtKB" id="P50052"/>
    </source>
</evidence>
<evidence type="ECO:0000255" key="3"/>
<evidence type="ECO:0000255" key="4">
    <source>
        <dbReference type="PROSITE-ProRule" id="PRU00521"/>
    </source>
</evidence>
<evidence type="ECO:0000269" key="5">
    <source>
    </source>
</evidence>
<evidence type="ECO:0000269" key="6">
    <source>
    </source>
</evidence>
<evidence type="ECO:0000269" key="7">
    <source>
    </source>
</evidence>
<evidence type="ECO:0000303" key="8">
    <source>
    </source>
</evidence>
<evidence type="ECO:0000303" key="9">
    <source>
    </source>
</evidence>
<evidence type="ECO:0000303" key="10">
    <source>
    </source>
</evidence>
<evidence type="ECO:0000312" key="11">
    <source>
        <dbReference type="RGD" id="2072"/>
    </source>
</evidence>
<keyword id="KW-1003">Cell membrane</keyword>
<keyword id="KW-1015">Disulfide bond</keyword>
<keyword id="KW-0297">G-protein coupled receptor</keyword>
<keyword id="KW-0325">Glycoprotein</keyword>
<keyword id="KW-0472">Membrane</keyword>
<keyword id="KW-0597">Phosphoprotein</keyword>
<keyword id="KW-0675">Receptor</keyword>
<keyword id="KW-1185">Reference proteome</keyword>
<keyword id="KW-0807">Transducer</keyword>
<keyword id="KW-0812">Transmembrane</keyword>
<keyword id="KW-1133">Transmembrane helix</keyword>
<comment type="function">
    <text evidence="2 7">Receptor for angiotensin II, a vasoconstricting peptide (PubMed:8227011). Signals primarily via a non-canonical G-protein- and beta-arrestin independent pathways. Cooperates with MTUS1 to inhibit ERK2 activation and cell proliferation (By similarity).</text>
</comment>
<comment type="subunit">
    <text evidence="2">Interacts with MTUS1.</text>
</comment>
<comment type="subcellular location">
    <subcellularLocation>
        <location evidence="1">Cell membrane</location>
        <topology evidence="2">Multi-pass membrane protein</topology>
    </subcellularLocation>
</comment>
<comment type="tissue specificity">
    <text evidence="6 7">Abundant expression in fetal tissues, immature brain, skin wound and atretic ovarian follicles.</text>
</comment>
<comment type="developmental stage">
    <text evidence="6 7">Abundant in whole fetus but decreases rapidly after birth. In adults is highly expressed in the adrenal, present in the brain and uterus but undetectable in the heart.</text>
</comment>
<comment type="domain">
    <text evidence="2">Helix VIII may act as a gatekeeper for either suppression or activation of the receptor, depending on post-translational modifications and interactions with various receptor partners. Helix VIII is found in a non-canonical position, stabilizing the active-like state, but at the same time preventing the recruitment of G-proteins or beta-arrestins. Upon switching to a membrane-bound conformation, helix VIII can support the recruitment of G proteins and beta-arrestins.</text>
</comment>
<comment type="similarity">
    <text evidence="4">Belongs to the G-protein coupled receptor 1 family.</text>
</comment>
<reference key="1">
    <citation type="journal article" date="1993" name="J. Biol. Chem.">
        <title>Molecular cloning of a novel angiotensin II receptor isoform involved in phosphotyrosine phosphatase inhibition.</title>
        <authorList>
            <person name="Kambayashi Y."/>
            <person name="Bardhan S."/>
            <person name="Takahashi K."/>
            <person name="Tsuzuki S."/>
            <person name="Inui H."/>
            <person name="Hamakubo T."/>
            <person name="Inagami T."/>
        </authorList>
    </citation>
    <scope>NUCLEOTIDE SEQUENCE [MRNA]</scope>
    <scope>FUNCTION</scope>
    <scope>TISSUE SPECIFICITY</scope>
    <scope>DEVELOPMENTAL STAGE</scope>
</reference>
<reference key="2">
    <citation type="journal article" date="1993" name="J. Biol. Chem.">
        <title>Expression cloning of type 2 angiotensin II receptor reveals a unique class of seven-transmembrane receptors.</title>
        <authorList>
            <person name="Mukoyama M."/>
            <person name="Nakajima M."/>
            <person name="Horiuchi M."/>
            <person name="Sasamura H."/>
            <person name="Pratt R.E."/>
            <person name="Dzau V.J."/>
        </authorList>
    </citation>
    <scope>NUCLEOTIDE SEQUENCE [GENOMIC DNA]</scope>
    <scope>TISSUE SPECIFICITY</scope>
    <scope>DEVELOPMENTAL STAGE</scope>
    <source>
        <strain>Sprague-Dawley</strain>
        <tissue>Fetus</tissue>
    </source>
</reference>
<reference key="3">
    <citation type="journal article" date="1995" name="Hypertension">
        <title>Cloning, characterization, and genetic mapping of the rat type 2 angiotensin II receptor gene.</title>
        <authorList>
            <person name="Koike G."/>
            <person name="Winer E.S."/>
            <person name="Horiuchi M."/>
            <person name="Brown D.M."/>
            <person name="Szpirer C."/>
            <person name="Dzau V.J."/>
            <person name="Jacob H.J."/>
        </authorList>
    </citation>
    <scope>NUCLEOTIDE SEQUENCE [GENOMIC DNA]</scope>
    <source>
        <strain>Fischer</strain>
        <tissue>Liver</tissue>
    </source>
</reference>
<reference key="4">
    <citation type="journal article" date="1994" name="Eur. Heart J.">
        <title>Cloning, expression and regulation of angiotensin II receptors.</title>
        <authorList>
            <person name="Inagami T."/>
            <person name="Iwai N."/>
            <person name="Sasaki K."/>
            <person name="Yamano Y."/>
            <person name="Bardhan S."/>
            <person name="Chaki S."/>
            <person name="Guo D.F."/>
            <person name="Furuta H."/>
            <person name="Ohyama K."/>
            <person name="Kambayashi Y."/>
            <person name="Takahashi K."/>
            <person name="Ichiki T."/>
        </authorList>
    </citation>
    <scope>NUCLEOTIDE SEQUENCE [GENOMIC DNA]</scope>
</reference>
<reference key="5">
    <citation type="journal article" date="1995" name="Biochim. Biophys. Acta">
        <title>Cloning of the rat angiotensin II type 2 receptor gene and identification of its functional promoter region.</title>
        <authorList>
            <person name="Kobayashi S."/>
            <person name="Ohnishi J."/>
            <person name="Nibu Y."/>
            <person name="Nishimatsu S."/>
            <person name="Umemura S."/>
            <person name="Ishii M."/>
            <person name="Murakami K."/>
            <person name="Miyazaki H."/>
        </authorList>
    </citation>
    <scope>NUCLEOTIDE SEQUENCE [GENOMIC DNA] OF 1-143</scope>
    <source>
        <strain>Sprague-Dawley</strain>
    </source>
</reference>
<reference key="6">
    <citation type="journal article" date="2000" name="FEBS Lett.">
        <title>Reversible inactivation of AT(2) angiotensin II receptor from cysteine-disulfide bond exchange.</title>
        <authorList>
            <person name="Feng Y.H."/>
            <person name="Saad Y."/>
            <person name="Karnik S.S."/>
        </authorList>
    </citation>
    <scope>DISULFIDE BONDS</scope>
</reference>
<protein>
    <recommendedName>
        <fullName evidence="9">Type-2 angiotensin II receptor</fullName>
    </recommendedName>
    <alternativeName>
        <fullName evidence="8">Angiotensin II type-2 receptor</fullName>
        <shortName evidence="10">AT2 receptor</shortName>
    </alternativeName>
</protein>
<name>AGTR2_RAT</name>
<organism>
    <name type="scientific">Rattus norvegicus</name>
    <name type="common">Rat</name>
    <dbReference type="NCBI Taxonomy" id="10116"/>
    <lineage>
        <taxon>Eukaryota</taxon>
        <taxon>Metazoa</taxon>
        <taxon>Chordata</taxon>
        <taxon>Craniata</taxon>
        <taxon>Vertebrata</taxon>
        <taxon>Euteleostomi</taxon>
        <taxon>Mammalia</taxon>
        <taxon>Eutheria</taxon>
        <taxon>Euarchontoglires</taxon>
        <taxon>Glires</taxon>
        <taxon>Rodentia</taxon>
        <taxon>Myomorpha</taxon>
        <taxon>Muroidea</taxon>
        <taxon>Muridae</taxon>
        <taxon>Murinae</taxon>
        <taxon>Rattus</taxon>
    </lineage>
</organism>
<feature type="chain" id="PRO_0000069170" description="Type-2 angiotensin II receptor">
    <location>
        <begin position="1"/>
        <end position="363"/>
    </location>
</feature>
<feature type="topological domain" description="Extracellular" evidence="2">
    <location>
        <begin position="1"/>
        <end position="45"/>
    </location>
</feature>
<feature type="transmembrane region" description="Helical; Name=1" evidence="2">
    <location>
        <begin position="46"/>
        <end position="70"/>
    </location>
</feature>
<feature type="topological domain" description="Cytoplasmic" evidence="2">
    <location>
        <begin position="71"/>
        <end position="80"/>
    </location>
</feature>
<feature type="transmembrane region" description="Helical; Name=2" evidence="2">
    <location>
        <begin position="81"/>
        <end position="104"/>
    </location>
</feature>
<feature type="topological domain" description="Extracellular" evidence="2">
    <location>
        <begin position="105"/>
        <end position="114"/>
    </location>
</feature>
<feature type="transmembrane region" description="Helical; Name=3" evidence="2">
    <location>
        <begin position="115"/>
        <end position="140"/>
    </location>
</feature>
<feature type="topological domain" description="Cytoplasmic" evidence="2">
    <location>
        <begin position="141"/>
        <end position="159"/>
    </location>
</feature>
<feature type="transmembrane region" description="Helical; Name=4" evidence="2">
    <location>
        <begin position="160"/>
        <end position="181"/>
    </location>
</feature>
<feature type="topological domain" description="Extracellular" evidence="2">
    <location>
        <begin position="182"/>
        <end position="206"/>
    </location>
</feature>
<feature type="transmembrane region" description="Helical; Name=5" evidence="2">
    <location>
        <begin position="207"/>
        <end position="232"/>
    </location>
</feature>
<feature type="topological domain" description="Cytoplasmic" evidence="2">
    <location>
        <begin position="233"/>
        <end position="257"/>
    </location>
</feature>
<feature type="transmembrane region" description="Helical; Name=6" evidence="2">
    <location>
        <begin position="258"/>
        <end position="281"/>
    </location>
</feature>
<feature type="topological domain" description="Extracellular" evidence="2">
    <location>
        <begin position="282"/>
        <end position="294"/>
    </location>
</feature>
<feature type="transmembrane region" description="Helical; Name=7" evidence="2">
    <location>
        <begin position="295"/>
        <end position="320"/>
    </location>
</feature>
<feature type="topological domain" description="Cytoplasmic" evidence="2">
    <location>
        <begin position="321"/>
        <end position="363"/>
    </location>
</feature>
<feature type="region of interest" description="Helix VIII" evidence="2">
    <location>
        <begin position="324"/>
        <end position="333"/>
    </location>
</feature>
<feature type="binding site" evidence="2">
    <location>
        <position position="103"/>
    </location>
    <ligand>
        <name>angiotensin II</name>
        <dbReference type="ChEBI" id="CHEBI:58506"/>
    </ligand>
</feature>
<feature type="binding site" evidence="2">
    <location>
        <position position="104"/>
    </location>
    <ligand>
        <name>angiotensin II</name>
        <dbReference type="ChEBI" id="CHEBI:58506"/>
    </ligand>
</feature>
<feature type="binding site" evidence="2">
    <location>
        <position position="182"/>
    </location>
    <ligand>
        <name>angiotensin II</name>
        <dbReference type="ChEBI" id="CHEBI:58506"/>
    </ligand>
</feature>
<feature type="binding site" evidence="2">
    <location>
        <position position="204"/>
    </location>
    <ligand>
        <name>angiotensin II</name>
        <dbReference type="ChEBI" id="CHEBI:58506"/>
    </ligand>
</feature>
<feature type="binding site" evidence="2">
    <location>
        <position position="215"/>
    </location>
    <ligand>
        <name>angiotensin II</name>
        <dbReference type="ChEBI" id="CHEBI:58506"/>
    </ligand>
</feature>
<feature type="binding site" evidence="2">
    <location>
        <position position="279"/>
    </location>
    <ligand>
        <name>angiotensin II</name>
        <dbReference type="ChEBI" id="CHEBI:58506"/>
    </ligand>
</feature>
<feature type="binding site" evidence="2">
    <location>
        <position position="297"/>
    </location>
    <ligand>
        <name>angiotensin II</name>
        <dbReference type="ChEBI" id="CHEBI:58506"/>
    </ligand>
</feature>
<feature type="modified residue" description="Phosphoserine; by PKC" evidence="3">
    <location>
        <position position="354"/>
    </location>
</feature>
<feature type="glycosylation site" description="N-linked (GlcNAc...) asparagine" evidence="3">
    <location>
        <position position="4"/>
    </location>
</feature>
<feature type="glycosylation site" description="N-linked (GlcNAc...) asparagine" evidence="3">
    <location>
        <position position="13"/>
    </location>
</feature>
<feature type="glycosylation site" description="N-linked (GlcNAc...) asparagine" evidence="3">
    <location>
        <position position="24"/>
    </location>
</feature>
<feature type="glycosylation site" description="N-linked (GlcNAc...) asparagine" evidence="3">
    <location>
        <position position="29"/>
    </location>
</feature>
<feature type="glycosylation site" description="N-linked (GlcNAc...) asparagine" evidence="3">
    <location>
        <position position="34"/>
    </location>
</feature>
<feature type="disulfide bond" evidence="4 5">
    <location>
        <begin position="35"/>
        <end position="290"/>
    </location>
</feature>
<feature type="disulfide bond" evidence="4 5">
    <location>
        <begin position="117"/>
        <end position="195"/>
    </location>
</feature>
<dbReference type="EMBL" id="D16840">
    <property type="protein sequence ID" value="BAA04116.1"/>
    <property type="molecule type" value="mRNA"/>
</dbReference>
<dbReference type="EMBL" id="U01908">
    <property type="protein sequence ID" value="AAC52126.1"/>
    <property type="molecule type" value="Genomic_DNA"/>
</dbReference>
<dbReference type="EMBL" id="U22663">
    <property type="protein sequence ID" value="AAA86509.1"/>
    <property type="molecule type" value="Genomic_DNA"/>
</dbReference>
<dbReference type="EMBL" id="D43778">
    <property type="protein sequence ID" value="BAA07833.1"/>
    <property type="molecule type" value="Genomic_DNA"/>
</dbReference>
<dbReference type="PIR" id="A49092">
    <property type="entry name" value="A49092"/>
</dbReference>
<dbReference type="RefSeq" id="NP_036626.1">
    <property type="nucleotide sequence ID" value="NM_012494.4"/>
</dbReference>
<dbReference type="RefSeq" id="XP_006257494.1">
    <property type="nucleotide sequence ID" value="XM_006257432.3"/>
</dbReference>
<dbReference type="RefSeq" id="XP_063135845.1">
    <property type="nucleotide sequence ID" value="XM_063279775.1"/>
</dbReference>
<dbReference type="SMR" id="P35351"/>
<dbReference type="BioGRID" id="246372">
    <property type="interactions" value="1"/>
</dbReference>
<dbReference type="CORUM" id="P35351"/>
<dbReference type="FunCoup" id="P35351">
    <property type="interactions" value="249"/>
</dbReference>
<dbReference type="STRING" id="10116.ENSRNOP00000064709"/>
<dbReference type="BindingDB" id="P35351"/>
<dbReference type="ChEMBL" id="CHEMBL257"/>
<dbReference type="DrugCentral" id="P35351"/>
<dbReference type="GuidetoPHARMACOLOGY" id="35"/>
<dbReference type="GlyCosmos" id="P35351">
    <property type="glycosylation" value="5 sites, No reported glycans"/>
</dbReference>
<dbReference type="GlyGen" id="P35351">
    <property type="glycosylation" value="5 sites"/>
</dbReference>
<dbReference type="iPTMnet" id="P35351"/>
<dbReference type="PhosphoSitePlus" id="P35351"/>
<dbReference type="PaxDb" id="10116-ENSRNOP00000064709"/>
<dbReference type="Ensembl" id="ENSRNOT00000074269.2">
    <property type="protein sequence ID" value="ENSRNOP00000064709.1"/>
    <property type="gene ID" value="ENSRNOG00000050006.2"/>
</dbReference>
<dbReference type="GeneID" id="24182"/>
<dbReference type="KEGG" id="rno:24182"/>
<dbReference type="AGR" id="RGD:2072"/>
<dbReference type="CTD" id="186"/>
<dbReference type="RGD" id="2072">
    <property type="gene designation" value="Agtr2"/>
</dbReference>
<dbReference type="eggNOG" id="KOG3656">
    <property type="taxonomic scope" value="Eukaryota"/>
</dbReference>
<dbReference type="GeneTree" id="ENSGT01130000278303"/>
<dbReference type="HOGENOM" id="CLU_009579_8_3_1"/>
<dbReference type="InParanoid" id="P35351"/>
<dbReference type="OMA" id="TFNCSHK"/>
<dbReference type="OrthoDB" id="8804420at2759"/>
<dbReference type="PhylomeDB" id="P35351"/>
<dbReference type="Reactome" id="R-RNO-375276">
    <property type="pathway name" value="Peptide ligand-binding receptors"/>
</dbReference>
<dbReference type="Reactome" id="R-RNO-418594">
    <property type="pathway name" value="G alpha (i) signalling events"/>
</dbReference>
<dbReference type="PRO" id="PR:P35351"/>
<dbReference type="Proteomes" id="UP000002494">
    <property type="component" value="Chromosome X"/>
</dbReference>
<dbReference type="Bgee" id="ENSRNOG00000050006">
    <property type="expression patterns" value="Expressed in esophagus and 5 other cell types or tissues"/>
</dbReference>
<dbReference type="ExpressionAtlas" id="P35351">
    <property type="expression patterns" value="baseline and differential"/>
</dbReference>
<dbReference type="GO" id="GO:0048471">
    <property type="term" value="C:perinuclear region of cytoplasm"/>
    <property type="evidence" value="ECO:0000314"/>
    <property type="project" value="RGD"/>
</dbReference>
<dbReference type="GO" id="GO:0005886">
    <property type="term" value="C:plasma membrane"/>
    <property type="evidence" value="ECO:0000318"/>
    <property type="project" value="GO_Central"/>
</dbReference>
<dbReference type="GO" id="GO:0004945">
    <property type="term" value="F:angiotensin type II receptor activity"/>
    <property type="evidence" value="ECO:0000314"/>
    <property type="project" value="UniProtKB"/>
</dbReference>
<dbReference type="GO" id="GO:0001965">
    <property type="term" value="F:G-protein alpha-subunit binding"/>
    <property type="evidence" value="ECO:0000304"/>
    <property type="project" value="RGD"/>
</dbReference>
<dbReference type="GO" id="GO:0038166">
    <property type="term" value="P:angiotensin-activated signaling pathway"/>
    <property type="evidence" value="ECO:0000266"/>
    <property type="project" value="RGD"/>
</dbReference>
<dbReference type="GO" id="GO:0002033">
    <property type="term" value="P:angiotensin-mediated vasodilation involved in regulation of systemic arterial blood pressure"/>
    <property type="evidence" value="ECO:0000266"/>
    <property type="project" value="RGD"/>
</dbReference>
<dbReference type="GO" id="GO:0002035">
    <property type="term" value="P:brain renin-angiotensin system"/>
    <property type="evidence" value="ECO:0000266"/>
    <property type="project" value="RGD"/>
</dbReference>
<dbReference type="GO" id="GO:0061049">
    <property type="term" value="P:cell growth involved in cardiac muscle cell development"/>
    <property type="evidence" value="ECO:0000315"/>
    <property type="project" value="RGD"/>
</dbReference>
<dbReference type="GO" id="GO:0007166">
    <property type="term" value="P:cell surface receptor signaling pathway"/>
    <property type="evidence" value="ECO:0000266"/>
    <property type="project" value="RGD"/>
</dbReference>
<dbReference type="GO" id="GO:0071549">
    <property type="term" value="P:cellular response to dexamethasone stimulus"/>
    <property type="evidence" value="ECO:0000314"/>
    <property type="project" value="UniProtKB"/>
</dbReference>
<dbReference type="GO" id="GO:0021695">
    <property type="term" value="P:cerebellar cortex development"/>
    <property type="evidence" value="ECO:0000315"/>
    <property type="project" value="RGD"/>
</dbReference>
<dbReference type="GO" id="GO:0042416">
    <property type="term" value="P:dopamine biosynthetic process"/>
    <property type="evidence" value="ECO:0000315"/>
    <property type="project" value="RGD"/>
</dbReference>
<dbReference type="GO" id="GO:0035640">
    <property type="term" value="P:exploration behavior"/>
    <property type="evidence" value="ECO:0000266"/>
    <property type="project" value="RGD"/>
</dbReference>
<dbReference type="GO" id="GO:0007186">
    <property type="term" value="P:G protein-coupled receptor signaling pathway"/>
    <property type="evidence" value="ECO:0000318"/>
    <property type="project" value="GO_Central"/>
</dbReference>
<dbReference type="GO" id="GO:0007199">
    <property type="term" value="P:G protein-coupled receptor signaling pathway coupled to cGMP nucleotide second messenger"/>
    <property type="evidence" value="ECO:0000266"/>
    <property type="project" value="RGD"/>
</dbReference>
<dbReference type="GO" id="GO:0006954">
    <property type="term" value="P:inflammatory response"/>
    <property type="evidence" value="ECO:0000266"/>
    <property type="project" value="RGD"/>
</dbReference>
<dbReference type="GO" id="GO:0006883">
    <property type="term" value="P:intracellular sodium ion homeostasis"/>
    <property type="evidence" value="ECO:0000315"/>
    <property type="project" value="RGD"/>
</dbReference>
<dbReference type="GO" id="GO:0001822">
    <property type="term" value="P:kidney development"/>
    <property type="evidence" value="ECO:0000270"/>
    <property type="project" value="RGD"/>
</dbReference>
<dbReference type="GO" id="GO:0060993">
    <property type="term" value="P:kidney morphogenesis"/>
    <property type="evidence" value="ECO:0000315"/>
    <property type="project" value="RGD"/>
</dbReference>
<dbReference type="GO" id="GO:0048147">
    <property type="term" value="P:negative regulation of fibroblast proliferation"/>
    <property type="evidence" value="ECO:0000315"/>
    <property type="project" value="RGD"/>
</dbReference>
<dbReference type="GO" id="GO:0010459">
    <property type="term" value="P:negative regulation of heart rate"/>
    <property type="evidence" value="ECO:0000266"/>
    <property type="project" value="RGD"/>
</dbReference>
<dbReference type="GO" id="GO:0032304">
    <property type="term" value="P:negative regulation of icosanoid secretion"/>
    <property type="evidence" value="ECO:0000315"/>
    <property type="project" value="RGD"/>
</dbReference>
<dbReference type="GO" id="GO:0051387">
    <property type="term" value="P:negative regulation of neurotrophin TRK receptor signaling pathway"/>
    <property type="evidence" value="ECO:0000266"/>
    <property type="project" value="RGD"/>
</dbReference>
<dbReference type="GO" id="GO:0010700">
    <property type="term" value="P:negative regulation of norepinephrine secretion"/>
    <property type="evidence" value="ECO:0000314"/>
    <property type="project" value="RGD"/>
</dbReference>
<dbReference type="GO" id="GO:0051402">
    <property type="term" value="P:neuron apoptotic process"/>
    <property type="evidence" value="ECO:0000266"/>
    <property type="project" value="RGD"/>
</dbReference>
<dbReference type="GO" id="GO:0030182">
    <property type="term" value="P:neuron differentiation"/>
    <property type="evidence" value="ECO:0000304"/>
    <property type="project" value="RGD"/>
</dbReference>
<dbReference type="GO" id="GO:0038060">
    <property type="term" value="P:nitric oxide-cGMP-mediated signaling"/>
    <property type="evidence" value="ECO:0000266"/>
    <property type="project" value="RGD"/>
</dbReference>
<dbReference type="GO" id="GO:0090190">
    <property type="term" value="P:positive regulation of branching involved in ureteric bud morphogenesis"/>
    <property type="evidence" value="ECO:0000315"/>
    <property type="project" value="UniProtKB"/>
</dbReference>
<dbReference type="GO" id="GO:0008284">
    <property type="term" value="P:positive regulation of cell population proliferation"/>
    <property type="evidence" value="ECO:0000315"/>
    <property type="project" value="RGD"/>
</dbReference>
<dbReference type="GO" id="GO:0001819">
    <property type="term" value="P:positive regulation of cytokine production"/>
    <property type="evidence" value="ECO:0000315"/>
    <property type="project" value="RGD"/>
</dbReference>
<dbReference type="GO" id="GO:0045893">
    <property type="term" value="P:positive regulation of DNA-templated transcription"/>
    <property type="evidence" value="ECO:0000266"/>
    <property type="project" value="RGD"/>
</dbReference>
<dbReference type="GO" id="GO:2001238">
    <property type="term" value="P:positive regulation of extrinsic apoptotic signaling pathway"/>
    <property type="evidence" value="ECO:0000266"/>
    <property type="project" value="RGD"/>
</dbReference>
<dbReference type="GO" id="GO:0072300">
    <property type="term" value="P:positive regulation of metanephric glomerulus development"/>
    <property type="evidence" value="ECO:0000266"/>
    <property type="project" value="RGD"/>
</dbReference>
<dbReference type="GO" id="GO:0035566">
    <property type="term" value="P:regulation of metanephros size"/>
    <property type="evidence" value="ECO:0000266"/>
    <property type="project" value="RGD"/>
</dbReference>
<dbReference type="GO" id="GO:0042306">
    <property type="term" value="P:regulation of protein import into nucleus"/>
    <property type="evidence" value="ECO:0000314"/>
    <property type="project" value="RGD"/>
</dbReference>
<dbReference type="GO" id="GO:0001991">
    <property type="term" value="P:regulation of systemic arterial blood pressure by circulatory renin-angiotensin"/>
    <property type="evidence" value="ECO:0000266"/>
    <property type="project" value="RGD"/>
</dbReference>
<dbReference type="GO" id="GO:0002018">
    <property type="term" value="P:renin-angiotensin regulation of aldosterone production"/>
    <property type="evidence" value="ECO:0000315"/>
    <property type="project" value="RGD"/>
</dbReference>
<dbReference type="GO" id="GO:0042311">
    <property type="term" value="P:vasodilation"/>
    <property type="evidence" value="ECO:0000315"/>
    <property type="project" value="RGD"/>
</dbReference>
<dbReference type="CDD" id="cd15191">
    <property type="entry name" value="7tmA_AT2R"/>
    <property type="match status" value="1"/>
</dbReference>
<dbReference type="FunFam" id="1.20.1070.10:FF:000161">
    <property type="entry name" value="type-2 angiotensin II receptor"/>
    <property type="match status" value="1"/>
</dbReference>
<dbReference type="Gene3D" id="1.20.1070.10">
    <property type="entry name" value="Rhodopsin 7-helix transmembrane proteins"/>
    <property type="match status" value="1"/>
</dbReference>
<dbReference type="InterPro" id="IPR000147">
    <property type="entry name" value="ATII_AT2_rcpt"/>
</dbReference>
<dbReference type="InterPro" id="IPR000248">
    <property type="entry name" value="ATII_rcpt"/>
</dbReference>
<dbReference type="InterPro" id="IPR050119">
    <property type="entry name" value="CCR1-9-like"/>
</dbReference>
<dbReference type="InterPro" id="IPR000276">
    <property type="entry name" value="GPCR_Rhodpsn"/>
</dbReference>
<dbReference type="InterPro" id="IPR017452">
    <property type="entry name" value="GPCR_Rhodpsn_7TM"/>
</dbReference>
<dbReference type="PANTHER" id="PTHR10489">
    <property type="entry name" value="CELL ADHESION MOLECULE"/>
    <property type="match status" value="1"/>
</dbReference>
<dbReference type="PANTHER" id="PTHR10489:SF952">
    <property type="entry name" value="TYPE-2 ANGIOTENSIN II RECEPTOR"/>
    <property type="match status" value="1"/>
</dbReference>
<dbReference type="Pfam" id="PF00001">
    <property type="entry name" value="7tm_1"/>
    <property type="match status" value="1"/>
</dbReference>
<dbReference type="PRINTS" id="PR00241">
    <property type="entry name" value="ANGIOTENSINR"/>
</dbReference>
<dbReference type="PRINTS" id="PR00636">
    <property type="entry name" value="ANGIOTENSN2R"/>
</dbReference>
<dbReference type="PRINTS" id="PR00237">
    <property type="entry name" value="GPCRRHODOPSN"/>
</dbReference>
<dbReference type="SUPFAM" id="SSF81321">
    <property type="entry name" value="Family A G protein-coupled receptor-like"/>
    <property type="match status" value="1"/>
</dbReference>
<dbReference type="PROSITE" id="PS00237">
    <property type="entry name" value="G_PROTEIN_RECEP_F1_1"/>
    <property type="match status" value="1"/>
</dbReference>
<dbReference type="PROSITE" id="PS50262">
    <property type="entry name" value="G_PROTEIN_RECEP_F1_2"/>
    <property type="match status" value="1"/>
</dbReference>